<name>BGAL2_KLEP7</name>
<accession>A6TI29</accession>
<sequence length="1024" mass="116321">MTMITDSLAVVLQRRDWENPGVTQLNRLAAHPPFASWRNSEEARTDRPSQESRSLNGEWRFAWFPAPEAVPESWLERDLPDADTVIVPSNWQMHGYDAPIYTNVTYPIAVNPPYVPTENPTGCYSLTFNIDESWLQEGQTRIIFDGVNSAFHLWCNGRWVGYGQDSRLPSEFDLSAFLHAGENRLAVMVLRWSDGSYLEDQDMWRMSGIFRDVSLLHKPSTQISDFHVATHFNDDFSRAVLEADVQMYGELRDELRVTVSLWQGETQVASGTAPFGGEIIDERGGYADHVTLRLNVENPKLWSAEIPNLYRAVVELHTADGTLIEAEACDVGFREVRIENGLLLLNGKPLLIRGVNRHEHHPLHGQVMDEQTMVQDILLMKQNNFNAVRCSHYPNHPLWYTLCDHYGLYVVDEANIETHGMVPMNRLTDDPRWLPAMSERVTRMVQRDRNHPSVIIWSLGNESGHGANHDALYRWIKSVDPSRPVQYEGGGADTFATDIICPMYARVDEDQPFPAVPKWSIKKWLSLPGETRPLILCEYAHAMGNSLGGFAKYWQAFRQYPRLQGGFVWDWVDQSLIKYDENGNPWSAYGGDFGDTPNDRQFCMNGLVFADRTPHPALTEAKHQQQFFQFSLSGRTIEVTSEYLFRHSDNELLHWMVALDGKPLASGEVPLDVAPQGKQLIELPGLPQPKSAGQLWLTVHVVQPNATTWSAAGHISAWQQWRLAENLSVTLPSAPHAIPQLTTSETDFCIELDNKRWQFNRQSGFLSQMWIGDKKQLLTPLRDQFTRAPLDNDIGVSEATRIDPNAWVERWKAAGHYQAEAALLQCTADTLADAVLITTVHAWQHQGKTLFISRKTYRIDGSGQMAITVDVEVASNTPHPARIGLTCQLAQVAERVNWLGLGPQENYPDRLTAACFDRWDLPLSDMYTPYVFPSENGLRCGTRELNYGPHQWRGDFQFNISRYSQQQLMETSHRHLLHAEEGTWLNIDGFHMGIGGDDSWSPSVSAEFQLSAGSYHYQLLWCQK</sequence>
<evidence type="ECO:0000255" key="1">
    <source>
        <dbReference type="HAMAP-Rule" id="MF_01687"/>
    </source>
</evidence>
<comment type="catalytic activity">
    <reaction evidence="1">
        <text>Hydrolysis of terminal non-reducing beta-D-galactose residues in beta-D-galactosides.</text>
        <dbReference type="EC" id="3.2.1.23"/>
    </reaction>
</comment>
<comment type="cofactor">
    <cofactor evidence="1">
        <name>Mg(2+)</name>
        <dbReference type="ChEBI" id="CHEBI:18420"/>
    </cofactor>
    <text evidence="1">Binds 2 magnesium ions per monomer.</text>
</comment>
<comment type="cofactor">
    <cofactor evidence="1">
        <name>Na(+)</name>
        <dbReference type="ChEBI" id="CHEBI:29101"/>
    </cofactor>
    <text evidence="1">Binds 1 sodium ion per monomer.</text>
</comment>
<comment type="subunit">
    <text evidence="1">Homotetramer.</text>
</comment>
<comment type="similarity">
    <text evidence="1">Belongs to the glycosyl hydrolase 2 family.</text>
</comment>
<gene>
    <name evidence="1" type="primary">lacZ2</name>
    <name type="ordered locus">KPN78578_47890</name>
    <name type="ORF">KPN_pKPN3p05871</name>
</gene>
<feature type="chain" id="PRO_0000367002" description="Beta-galactosidase 2">
    <location>
        <begin position="1"/>
        <end position="1024"/>
    </location>
</feature>
<feature type="active site" description="Proton donor" evidence="1">
    <location>
        <position position="462"/>
    </location>
</feature>
<feature type="active site" description="Nucleophile" evidence="1">
    <location>
        <position position="538"/>
    </location>
</feature>
<feature type="binding site" evidence="1">
    <location>
        <position position="103"/>
    </location>
    <ligand>
        <name>substrate</name>
    </ligand>
</feature>
<feature type="binding site" evidence="1">
    <location>
        <position position="202"/>
    </location>
    <ligand>
        <name>Na(+)</name>
        <dbReference type="ChEBI" id="CHEBI:29101"/>
    </ligand>
</feature>
<feature type="binding site" evidence="1">
    <location>
        <position position="202"/>
    </location>
    <ligand>
        <name>substrate</name>
    </ligand>
</feature>
<feature type="binding site" evidence="1">
    <location>
        <position position="417"/>
    </location>
    <ligand>
        <name>Mg(2+)</name>
        <dbReference type="ChEBI" id="CHEBI:18420"/>
        <label>1</label>
    </ligand>
</feature>
<feature type="binding site" evidence="1">
    <location>
        <position position="419"/>
    </location>
    <ligand>
        <name>Mg(2+)</name>
        <dbReference type="ChEBI" id="CHEBI:18420"/>
        <label>1</label>
    </ligand>
</feature>
<feature type="binding site" evidence="1">
    <location>
        <position position="462"/>
    </location>
    <ligand>
        <name>Mg(2+)</name>
        <dbReference type="ChEBI" id="CHEBI:18420"/>
        <label>1</label>
    </ligand>
</feature>
<feature type="binding site" evidence="1">
    <location>
        <position position="462"/>
    </location>
    <ligand>
        <name>substrate</name>
    </ligand>
</feature>
<feature type="binding site" evidence="1">
    <location>
        <begin position="538"/>
        <end position="541"/>
    </location>
    <ligand>
        <name>substrate</name>
    </ligand>
</feature>
<feature type="binding site" evidence="1">
    <location>
        <position position="598"/>
    </location>
    <ligand>
        <name>Mg(2+)</name>
        <dbReference type="ChEBI" id="CHEBI:18420"/>
        <label>2</label>
    </ligand>
</feature>
<feature type="binding site" evidence="1">
    <location>
        <position position="602"/>
    </location>
    <ligand>
        <name>Na(+)</name>
        <dbReference type="ChEBI" id="CHEBI:29101"/>
    </ligand>
</feature>
<feature type="binding site" evidence="1">
    <location>
        <position position="605"/>
    </location>
    <ligand>
        <name>Na(+)</name>
        <dbReference type="ChEBI" id="CHEBI:29101"/>
    </ligand>
</feature>
<feature type="binding site" evidence="1">
    <location>
        <position position="605"/>
    </location>
    <ligand>
        <name>substrate</name>
    </ligand>
</feature>
<feature type="binding site" evidence="1">
    <location>
        <position position="1000"/>
    </location>
    <ligand>
        <name>substrate</name>
    </ligand>
</feature>
<feature type="site" description="Transition state stabilizer" evidence="1">
    <location>
        <position position="358"/>
    </location>
</feature>
<feature type="site" description="Transition state stabilizer" evidence="1">
    <location>
        <position position="392"/>
    </location>
</feature>
<keyword id="KW-0326">Glycosidase</keyword>
<keyword id="KW-0378">Hydrolase</keyword>
<keyword id="KW-0460">Magnesium</keyword>
<keyword id="KW-0479">Metal-binding</keyword>
<keyword id="KW-0614">Plasmid</keyword>
<keyword id="KW-0915">Sodium</keyword>
<dbReference type="EC" id="3.2.1.23" evidence="1"/>
<dbReference type="EMBL" id="CP000648">
    <property type="protein sequence ID" value="ABR80250.1"/>
    <property type="molecule type" value="Genomic_DNA"/>
</dbReference>
<dbReference type="SMR" id="A6TI29"/>
<dbReference type="CAZy" id="GH2">
    <property type="family name" value="Glycoside Hydrolase Family 2"/>
</dbReference>
<dbReference type="EnsemblBacteria" id="ABR80250">
    <property type="protein sequence ID" value="ABR80250"/>
    <property type="gene ID" value="KPN_pKPN3p05871"/>
</dbReference>
<dbReference type="KEGG" id="kpn:KPN_pKPN3p05871"/>
<dbReference type="HOGENOM" id="CLU_002346_0_2_6"/>
<dbReference type="Proteomes" id="UP000000265">
    <property type="component" value="Plasmid pKPN3"/>
</dbReference>
<dbReference type="GO" id="GO:0009341">
    <property type="term" value="C:beta-galactosidase complex"/>
    <property type="evidence" value="ECO:0007669"/>
    <property type="project" value="InterPro"/>
</dbReference>
<dbReference type="GO" id="GO:0004565">
    <property type="term" value="F:beta-galactosidase activity"/>
    <property type="evidence" value="ECO:0007669"/>
    <property type="project" value="UniProtKB-EC"/>
</dbReference>
<dbReference type="GO" id="GO:0030246">
    <property type="term" value="F:carbohydrate binding"/>
    <property type="evidence" value="ECO:0007669"/>
    <property type="project" value="InterPro"/>
</dbReference>
<dbReference type="GO" id="GO:0000287">
    <property type="term" value="F:magnesium ion binding"/>
    <property type="evidence" value="ECO:0007669"/>
    <property type="project" value="UniProtKB-UniRule"/>
</dbReference>
<dbReference type="GO" id="GO:0005990">
    <property type="term" value="P:lactose catabolic process"/>
    <property type="evidence" value="ECO:0007669"/>
    <property type="project" value="TreeGrafter"/>
</dbReference>
<dbReference type="FunFam" id="2.60.120.260:FF:000058">
    <property type="entry name" value="Beta-galactosidase"/>
    <property type="match status" value="1"/>
</dbReference>
<dbReference type="FunFam" id="2.60.40.10:FF:000680">
    <property type="entry name" value="Beta-galactosidase"/>
    <property type="match status" value="1"/>
</dbReference>
<dbReference type="FunFam" id="2.60.40.10:FF:000850">
    <property type="entry name" value="Beta-galactosidase"/>
    <property type="match status" value="1"/>
</dbReference>
<dbReference type="FunFam" id="2.70.98.10:FF:000006">
    <property type="entry name" value="Beta-galactosidase"/>
    <property type="match status" value="1"/>
</dbReference>
<dbReference type="FunFam" id="3.20.20.80:FF:000018">
    <property type="entry name" value="Beta-galactosidase"/>
    <property type="match status" value="1"/>
</dbReference>
<dbReference type="Gene3D" id="2.70.98.10">
    <property type="match status" value="1"/>
</dbReference>
<dbReference type="Gene3D" id="2.60.120.260">
    <property type="entry name" value="Galactose-binding domain-like"/>
    <property type="match status" value="1"/>
</dbReference>
<dbReference type="Gene3D" id="3.20.20.80">
    <property type="entry name" value="Glycosidases"/>
    <property type="match status" value="1"/>
</dbReference>
<dbReference type="Gene3D" id="2.60.40.10">
    <property type="entry name" value="Immunoglobulins"/>
    <property type="match status" value="2"/>
</dbReference>
<dbReference type="HAMAP" id="MF_01687">
    <property type="entry name" value="Beta_gal"/>
    <property type="match status" value="1"/>
</dbReference>
<dbReference type="InterPro" id="IPR004199">
    <property type="entry name" value="B-gal_small/dom_5"/>
</dbReference>
<dbReference type="InterPro" id="IPR050347">
    <property type="entry name" value="Bact_Beta-galactosidase"/>
</dbReference>
<dbReference type="InterPro" id="IPR036156">
    <property type="entry name" value="Beta-gal/glucu_dom_sf"/>
</dbReference>
<dbReference type="InterPro" id="IPR011013">
    <property type="entry name" value="Gal_mutarotase_sf_dom"/>
</dbReference>
<dbReference type="InterPro" id="IPR008979">
    <property type="entry name" value="Galactose-bd-like_sf"/>
</dbReference>
<dbReference type="InterPro" id="IPR014718">
    <property type="entry name" value="GH-type_carb-bd"/>
</dbReference>
<dbReference type="InterPro" id="IPR006101">
    <property type="entry name" value="Glyco_hydro_2"/>
</dbReference>
<dbReference type="InterPro" id="IPR023232">
    <property type="entry name" value="Glyco_hydro_2_AS"/>
</dbReference>
<dbReference type="InterPro" id="IPR023933">
    <property type="entry name" value="Glyco_hydro_2_beta_Galsidase"/>
</dbReference>
<dbReference type="InterPro" id="IPR006103">
    <property type="entry name" value="Glyco_hydro_2_cat"/>
</dbReference>
<dbReference type="InterPro" id="IPR023230">
    <property type="entry name" value="Glyco_hydro_2_CS"/>
</dbReference>
<dbReference type="InterPro" id="IPR006102">
    <property type="entry name" value="Glyco_hydro_2_Ig-like"/>
</dbReference>
<dbReference type="InterPro" id="IPR006104">
    <property type="entry name" value="Glyco_hydro_2_N"/>
</dbReference>
<dbReference type="InterPro" id="IPR017853">
    <property type="entry name" value="Glycoside_hydrolase_SF"/>
</dbReference>
<dbReference type="InterPro" id="IPR013783">
    <property type="entry name" value="Ig-like_fold"/>
</dbReference>
<dbReference type="InterPro" id="IPR032312">
    <property type="entry name" value="LacZ_4"/>
</dbReference>
<dbReference type="NCBIfam" id="NF007074">
    <property type="entry name" value="PRK09525.1"/>
    <property type="match status" value="1"/>
</dbReference>
<dbReference type="PANTHER" id="PTHR46323">
    <property type="entry name" value="BETA-GALACTOSIDASE"/>
    <property type="match status" value="1"/>
</dbReference>
<dbReference type="PANTHER" id="PTHR46323:SF2">
    <property type="entry name" value="BETA-GALACTOSIDASE"/>
    <property type="match status" value="1"/>
</dbReference>
<dbReference type="Pfam" id="PF02929">
    <property type="entry name" value="Bgal_small_N"/>
    <property type="match status" value="1"/>
</dbReference>
<dbReference type="Pfam" id="PF00703">
    <property type="entry name" value="Glyco_hydro_2"/>
    <property type="match status" value="1"/>
</dbReference>
<dbReference type="Pfam" id="PF02836">
    <property type="entry name" value="Glyco_hydro_2_C"/>
    <property type="match status" value="1"/>
</dbReference>
<dbReference type="Pfam" id="PF02837">
    <property type="entry name" value="Glyco_hydro_2_N"/>
    <property type="match status" value="1"/>
</dbReference>
<dbReference type="Pfam" id="PF16353">
    <property type="entry name" value="LacZ_4"/>
    <property type="match status" value="1"/>
</dbReference>
<dbReference type="PRINTS" id="PR00132">
    <property type="entry name" value="GLHYDRLASE2"/>
</dbReference>
<dbReference type="SMART" id="SM01038">
    <property type="entry name" value="Bgal_small_N"/>
    <property type="match status" value="1"/>
</dbReference>
<dbReference type="SUPFAM" id="SSF51445">
    <property type="entry name" value="(Trans)glycosidases"/>
    <property type="match status" value="1"/>
</dbReference>
<dbReference type="SUPFAM" id="SSF49303">
    <property type="entry name" value="beta-Galactosidase/glucuronidase domain"/>
    <property type="match status" value="2"/>
</dbReference>
<dbReference type="SUPFAM" id="SSF74650">
    <property type="entry name" value="Galactose mutarotase-like"/>
    <property type="match status" value="1"/>
</dbReference>
<dbReference type="SUPFAM" id="SSF49785">
    <property type="entry name" value="Galactose-binding domain-like"/>
    <property type="match status" value="1"/>
</dbReference>
<dbReference type="PROSITE" id="PS00719">
    <property type="entry name" value="GLYCOSYL_HYDROL_F2_1"/>
    <property type="match status" value="1"/>
</dbReference>
<dbReference type="PROSITE" id="PS00608">
    <property type="entry name" value="GLYCOSYL_HYDROL_F2_2"/>
    <property type="match status" value="1"/>
</dbReference>
<proteinExistence type="inferred from homology"/>
<geneLocation type="plasmid">
    <name>pKPN3</name>
</geneLocation>
<protein>
    <recommendedName>
        <fullName evidence="1">Beta-galactosidase 2</fullName>
        <shortName evidence="1">Beta-gal 2</shortName>
        <ecNumber evidence="1">3.2.1.23</ecNumber>
    </recommendedName>
    <alternativeName>
        <fullName evidence="1">Lactase 2</fullName>
    </alternativeName>
</protein>
<reference key="1">
    <citation type="submission" date="2006-09" db="EMBL/GenBank/DDBJ databases">
        <authorList>
            <consortium name="The Klebsiella pneumonia Genome Sequencing Project"/>
            <person name="McClelland M."/>
            <person name="Sanderson E.K."/>
            <person name="Spieth J."/>
            <person name="Clifton W.S."/>
            <person name="Latreille P."/>
            <person name="Sabo A."/>
            <person name="Pepin K."/>
            <person name="Bhonagiri V."/>
            <person name="Porwollik S."/>
            <person name="Ali J."/>
            <person name="Wilson R.K."/>
        </authorList>
    </citation>
    <scope>NUCLEOTIDE SEQUENCE [LARGE SCALE GENOMIC DNA]</scope>
    <source>
        <strain>ATCC 700721 / MGH 78578</strain>
    </source>
</reference>
<organism>
    <name type="scientific">Klebsiella pneumoniae subsp. pneumoniae (strain ATCC 700721 / MGH 78578)</name>
    <dbReference type="NCBI Taxonomy" id="272620"/>
    <lineage>
        <taxon>Bacteria</taxon>
        <taxon>Pseudomonadati</taxon>
        <taxon>Pseudomonadota</taxon>
        <taxon>Gammaproteobacteria</taxon>
        <taxon>Enterobacterales</taxon>
        <taxon>Enterobacteriaceae</taxon>
        <taxon>Klebsiella/Raoultella group</taxon>
        <taxon>Klebsiella</taxon>
        <taxon>Klebsiella pneumoniae complex</taxon>
    </lineage>
</organism>